<reference key="1">
    <citation type="submission" date="2008-10" db="EMBL/GenBank/DDBJ databases">
        <title>Genome sequence of Bacillus cereus AH187.</title>
        <authorList>
            <person name="Dodson R.J."/>
            <person name="Durkin A.S."/>
            <person name="Rosovitz M.J."/>
            <person name="Rasko D.A."/>
            <person name="Kolsto A.B."/>
            <person name="Okstad O.A."/>
            <person name="Ravel J."/>
            <person name="Sutton G."/>
        </authorList>
    </citation>
    <scope>NUCLEOTIDE SEQUENCE [LARGE SCALE GENOMIC DNA]</scope>
    <source>
        <strain>AH187</strain>
    </source>
</reference>
<comment type="function">
    <text evidence="1">The RecF protein is involved in DNA metabolism; it is required for DNA replication and normal SOS inducibility. RecF binds preferentially to single-stranded, linear DNA. It also seems to bind ATP.</text>
</comment>
<comment type="subcellular location">
    <subcellularLocation>
        <location evidence="1">Cytoplasm</location>
    </subcellularLocation>
</comment>
<comment type="similarity">
    <text evidence="1">Belongs to the RecF family.</text>
</comment>
<keyword id="KW-0067">ATP-binding</keyword>
<keyword id="KW-0963">Cytoplasm</keyword>
<keyword id="KW-0227">DNA damage</keyword>
<keyword id="KW-0234">DNA repair</keyword>
<keyword id="KW-0235">DNA replication</keyword>
<keyword id="KW-0238">DNA-binding</keyword>
<keyword id="KW-0547">Nucleotide-binding</keyword>
<keyword id="KW-0742">SOS response</keyword>
<evidence type="ECO:0000255" key="1">
    <source>
        <dbReference type="HAMAP-Rule" id="MF_00365"/>
    </source>
</evidence>
<gene>
    <name evidence="1" type="primary">recF</name>
    <name type="ordered locus">BCAH187_A0004</name>
</gene>
<feature type="chain" id="PRO_1000121089" description="DNA replication and repair protein RecF">
    <location>
        <begin position="1"/>
        <end position="375"/>
    </location>
</feature>
<feature type="binding site" evidence="1">
    <location>
        <begin position="30"/>
        <end position="37"/>
    </location>
    <ligand>
        <name>ATP</name>
        <dbReference type="ChEBI" id="CHEBI:30616"/>
    </ligand>
</feature>
<dbReference type="EMBL" id="CP001177">
    <property type="protein sequence ID" value="ACJ81954.1"/>
    <property type="molecule type" value="Genomic_DNA"/>
</dbReference>
<dbReference type="SMR" id="B7HPS0"/>
<dbReference type="KEGG" id="bcr:BCAH187_A0004"/>
<dbReference type="HOGENOM" id="CLU_040267_0_1_9"/>
<dbReference type="Proteomes" id="UP000002214">
    <property type="component" value="Chromosome"/>
</dbReference>
<dbReference type="GO" id="GO:0005737">
    <property type="term" value="C:cytoplasm"/>
    <property type="evidence" value="ECO:0007669"/>
    <property type="project" value="UniProtKB-SubCell"/>
</dbReference>
<dbReference type="GO" id="GO:0005524">
    <property type="term" value="F:ATP binding"/>
    <property type="evidence" value="ECO:0007669"/>
    <property type="project" value="UniProtKB-UniRule"/>
</dbReference>
<dbReference type="GO" id="GO:0003697">
    <property type="term" value="F:single-stranded DNA binding"/>
    <property type="evidence" value="ECO:0007669"/>
    <property type="project" value="UniProtKB-UniRule"/>
</dbReference>
<dbReference type="GO" id="GO:0006260">
    <property type="term" value="P:DNA replication"/>
    <property type="evidence" value="ECO:0007669"/>
    <property type="project" value="UniProtKB-UniRule"/>
</dbReference>
<dbReference type="GO" id="GO:0000731">
    <property type="term" value="P:DNA synthesis involved in DNA repair"/>
    <property type="evidence" value="ECO:0007669"/>
    <property type="project" value="TreeGrafter"/>
</dbReference>
<dbReference type="GO" id="GO:0006302">
    <property type="term" value="P:double-strand break repair"/>
    <property type="evidence" value="ECO:0007669"/>
    <property type="project" value="TreeGrafter"/>
</dbReference>
<dbReference type="GO" id="GO:0009432">
    <property type="term" value="P:SOS response"/>
    <property type="evidence" value="ECO:0007669"/>
    <property type="project" value="UniProtKB-UniRule"/>
</dbReference>
<dbReference type="CDD" id="cd03242">
    <property type="entry name" value="ABC_RecF"/>
    <property type="match status" value="1"/>
</dbReference>
<dbReference type="FunFam" id="1.20.1050.90:FF:000002">
    <property type="entry name" value="DNA replication and repair protein RecF"/>
    <property type="match status" value="1"/>
</dbReference>
<dbReference type="FunFam" id="3.40.50.300:FF:000400">
    <property type="entry name" value="DNA replication and repair protein RecF"/>
    <property type="match status" value="1"/>
</dbReference>
<dbReference type="Gene3D" id="3.40.50.300">
    <property type="entry name" value="P-loop containing nucleotide triphosphate hydrolases"/>
    <property type="match status" value="1"/>
</dbReference>
<dbReference type="Gene3D" id="1.20.1050.90">
    <property type="entry name" value="RecF/RecN/SMC, N-terminal domain"/>
    <property type="match status" value="1"/>
</dbReference>
<dbReference type="HAMAP" id="MF_00365">
    <property type="entry name" value="RecF"/>
    <property type="match status" value="1"/>
</dbReference>
<dbReference type="InterPro" id="IPR001238">
    <property type="entry name" value="DNA-binding_RecF"/>
</dbReference>
<dbReference type="InterPro" id="IPR018078">
    <property type="entry name" value="DNA-binding_RecF_CS"/>
</dbReference>
<dbReference type="InterPro" id="IPR027417">
    <property type="entry name" value="P-loop_NTPase"/>
</dbReference>
<dbReference type="InterPro" id="IPR003395">
    <property type="entry name" value="RecF/RecN/SMC_N"/>
</dbReference>
<dbReference type="InterPro" id="IPR042174">
    <property type="entry name" value="RecF_2"/>
</dbReference>
<dbReference type="NCBIfam" id="TIGR00611">
    <property type="entry name" value="recf"/>
    <property type="match status" value="1"/>
</dbReference>
<dbReference type="PANTHER" id="PTHR32182">
    <property type="entry name" value="DNA REPLICATION AND REPAIR PROTEIN RECF"/>
    <property type="match status" value="1"/>
</dbReference>
<dbReference type="PANTHER" id="PTHR32182:SF0">
    <property type="entry name" value="DNA REPLICATION AND REPAIR PROTEIN RECF"/>
    <property type="match status" value="1"/>
</dbReference>
<dbReference type="Pfam" id="PF02463">
    <property type="entry name" value="SMC_N"/>
    <property type="match status" value="1"/>
</dbReference>
<dbReference type="SUPFAM" id="SSF52540">
    <property type="entry name" value="P-loop containing nucleoside triphosphate hydrolases"/>
    <property type="match status" value="1"/>
</dbReference>
<dbReference type="PROSITE" id="PS00617">
    <property type="entry name" value="RECF_1"/>
    <property type="match status" value="1"/>
</dbReference>
<dbReference type="PROSITE" id="PS00618">
    <property type="entry name" value="RECF_2"/>
    <property type="match status" value="1"/>
</dbReference>
<accession>B7HPS0</accession>
<name>RECF_BACC7</name>
<proteinExistence type="inferred from homology"/>
<protein>
    <recommendedName>
        <fullName evidence="1">DNA replication and repair protein RecF</fullName>
    </recommendedName>
</protein>
<sequence>MFISEIQLKNYRNYEKLELSFEDKVNVIIGENAQGKTNLMEAIYVLAMAKSHRTSNDRELIRWDEDFGQIKGKLQKRNSSLSLELNISKKGKKAKLNQLEQQKLSQYIGVMNVVMFAPEDLNLVKGSPQVRRRFLDMELGQIAPVYLYELSQYQKVLTQRNHLLKKMQGNSKNEETMLDVFTLQLIEHGTKILQKRFEFLHLLQEWAAPIHRGISRGLEELEIVYKPSVDVSESMDLSKIKEVYYESFQSVKQREIFRGTTLIGPHRDDLQFFVNSKNVQVFGSQGQQRTTALSLKLAEIELIYSEVKEYPILLLDDVLSELDDYRQSHLLNTIQGKVQTFVTTTSVDGIEHETLKEAKTIHVTNGTVDCEIDRA</sequence>
<organism>
    <name type="scientific">Bacillus cereus (strain AH187)</name>
    <dbReference type="NCBI Taxonomy" id="405534"/>
    <lineage>
        <taxon>Bacteria</taxon>
        <taxon>Bacillati</taxon>
        <taxon>Bacillota</taxon>
        <taxon>Bacilli</taxon>
        <taxon>Bacillales</taxon>
        <taxon>Bacillaceae</taxon>
        <taxon>Bacillus</taxon>
        <taxon>Bacillus cereus group</taxon>
    </lineage>
</organism>